<comment type="subunit">
    <text evidence="1">Part of the 50S ribosomal subunit. Contacts protein L32.</text>
</comment>
<comment type="similarity">
    <text evidence="1">Belongs to the bacterial ribosomal protein bL17 family.</text>
</comment>
<name>RL17_AMOA5</name>
<feature type="chain" id="PRO_1000144370" description="Large ribosomal subunit protein bL17">
    <location>
        <begin position="1"/>
        <end position="194"/>
    </location>
</feature>
<feature type="region of interest" description="Disordered" evidence="2">
    <location>
        <begin position="126"/>
        <end position="194"/>
    </location>
</feature>
<feature type="compositionally biased region" description="Basic residues" evidence="2">
    <location>
        <begin position="131"/>
        <end position="140"/>
    </location>
</feature>
<feature type="compositionally biased region" description="Polar residues" evidence="2">
    <location>
        <begin position="144"/>
        <end position="161"/>
    </location>
</feature>
<feature type="compositionally biased region" description="Polar residues" evidence="2">
    <location>
        <begin position="181"/>
        <end position="194"/>
    </location>
</feature>
<evidence type="ECO:0000255" key="1">
    <source>
        <dbReference type="HAMAP-Rule" id="MF_01368"/>
    </source>
</evidence>
<evidence type="ECO:0000256" key="2">
    <source>
        <dbReference type="SAM" id="MobiDB-lite"/>
    </source>
</evidence>
<evidence type="ECO:0000305" key="3"/>
<proteinExistence type="inferred from homology"/>
<accession>B3EUJ5</accession>
<reference key="1">
    <citation type="journal article" date="2010" name="J. Bacteriol.">
        <title>The genome of the amoeba symbiont 'Candidatus Amoebophilus asiaticus' reveals common mechanisms for host cell interaction among amoeba-associated bacteria.</title>
        <authorList>
            <person name="Schmitz-Esser S."/>
            <person name="Tischler P."/>
            <person name="Arnold R."/>
            <person name="Montanaro J."/>
            <person name="Wagner M."/>
            <person name="Rattei T."/>
            <person name="Horn M."/>
        </authorList>
    </citation>
    <scope>NUCLEOTIDE SEQUENCE [LARGE SCALE GENOMIC DNA]</scope>
    <source>
        <strain>5a2</strain>
    </source>
</reference>
<gene>
    <name evidence="1" type="primary">rplQ</name>
    <name type="ordered locus">Aasi_0169</name>
</gene>
<dbReference type="EMBL" id="CP001102">
    <property type="protein sequence ID" value="ACE05614.1"/>
    <property type="molecule type" value="Genomic_DNA"/>
</dbReference>
<dbReference type="RefSeq" id="WP_012472380.1">
    <property type="nucleotide sequence ID" value="NC_010830.1"/>
</dbReference>
<dbReference type="SMR" id="B3EUJ5"/>
<dbReference type="STRING" id="452471.Aasi_0169"/>
<dbReference type="KEGG" id="aas:Aasi_0169"/>
<dbReference type="eggNOG" id="COG0203">
    <property type="taxonomic scope" value="Bacteria"/>
</dbReference>
<dbReference type="HOGENOM" id="CLU_074407_0_1_10"/>
<dbReference type="OrthoDB" id="9809073at2"/>
<dbReference type="Proteomes" id="UP000001227">
    <property type="component" value="Chromosome"/>
</dbReference>
<dbReference type="GO" id="GO:0022625">
    <property type="term" value="C:cytosolic large ribosomal subunit"/>
    <property type="evidence" value="ECO:0007669"/>
    <property type="project" value="TreeGrafter"/>
</dbReference>
<dbReference type="GO" id="GO:0003735">
    <property type="term" value="F:structural constituent of ribosome"/>
    <property type="evidence" value="ECO:0007669"/>
    <property type="project" value="InterPro"/>
</dbReference>
<dbReference type="GO" id="GO:0006412">
    <property type="term" value="P:translation"/>
    <property type="evidence" value="ECO:0007669"/>
    <property type="project" value="UniProtKB-UniRule"/>
</dbReference>
<dbReference type="FunFam" id="3.90.1030.10:FF:000001">
    <property type="entry name" value="50S ribosomal protein L17"/>
    <property type="match status" value="1"/>
</dbReference>
<dbReference type="Gene3D" id="3.90.1030.10">
    <property type="entry name" value="Ribosomal protein L17"/>
    <property type="match status" value="1"/>
</dbReference>
<dbReference type="HAMAP" id="MF_01368">
    <property type="entry name" value="Ribosomal_bL17"/>
    <property type="match status" value="1"/>
</dbReference>
<dbReference type="InterPro" id="IPR000456">
    <property type="entry name" value="Ribosomal_bL17"/>
</dbReference>
<dbReference type="InterPro" id="IPR047859">
    <property type="entry name" value="Ribosomal_bL17_CS"/>
</dbReference>
<dbReference type="InterPro" id="IPR036373">
    <property type="entry name" value="Ribosomal_bL17_sf"/>
</dbReference>
<dbReference type="NCBIfam" id="TIGR00059">
    <property type="entry name" value="L17"/>
    <property type="match status" value="1"/>
</dbReference>
<dbReference type="PANTHER" id="PTHR14413:SF16">
    <property type="entry name" value="LARGE RIBOSOMAL SUBUNIT PROTEIN BL17M"/>
    <property type="match status" value="1"/>
</dbReference>
<dbReference type="PANTHER" id="PTHR14413">
    <property type="entry name" value="RIBOSOMAL PROTEIN L17"/>
    <property type="match status" value="1"/>
</dbReference>
<dbReference type="Pfam" id="PF01196">
    <property type="entry name" value="Ribosomal_L17"/>
    <property type="match status" value="1"/>
</dbReference>
<dbReference type="SUPFAM" id="SSF64263">
    <property type="entry name" value="Prokaryotic ribosomal protein L17"/>
    <property type="match status" value="1"/>
</dbReference>
<dbReference type="PROSITE" id="PS01167">
    <property type="entry name" value="RIBOSOMAL_L17"/>
    <property type="match status" value="1"/>
</dbReference>
<sequence length="194" mass="21858">MRHGKKFNHLSRPASHRKALLSNQAKSLILHKRIITTVAKAKALRKFVEPIITKAKQDSTHARRVVFSYFQDKEPVKLLFNEVAPKIGDRPGGYTRIIRLGNRLGDNAEMCMMELVDYNTYLQKAAEPKQTKARTRRGKGKLGATTTVSSEKTQPNTQDMATQAKPVENTQVEGADEQEALDTQSPEQTNKQEE</sequence>
<organism>
    <name type="scientific">Amoebophilus asiaticus (strain 5a2)</name>
    <dbReference type="NCBI Taxonomy" id="452471"/>
    <lineage>
        <taxon>Bacteria</taxon>
        <taxon>Pseudomonadati</taxon>
        <taxon>Bacteroidota</taxon>
        <taxon>Cytophagia</taxon>
        <taxon>Cytophagales</taxon>
        <taxon>Amoebophilaceae</taxon>
        <taxon>Candidatus Amoebophilus</taxon>
    </lineage>
</organism>
<keyword id="KW-1185">Reference proteome</keyword>
<keyword id="KW-0687">Ribonucleoprotein</keyword>
<keyword id="KW-0689">Ribosomal protein</keyword>
<protein>
    <recommendedName>
        <fullName evidence="1">Large ribosomal subunit protein bL17</fullName>
    </recommendedName>
    <alternativeName>
        <fullName evidence="3">50S ribosomal protein L17</fullName>
    </alternativeName>
</protein>